<evidence type="ECO:0000250" key="1"/>
<evidence type="ECO:0000250" key="2">
    <source>
        <dbReference type="UniProtKB" id="P63280"/>
    </source>
</evidence>
<evidence type="ECO:0000255" key="3">
    <source>
        <dbReference type="PROSITE-ProRule" id="PRU00388"/>
    </source>
</evidence>
<evidence type="ECO:0000255" key="4">
    <source>
        <dbReference type="PROSITE-ProRule" id="PRU10133"/>
    </source>
</evidence>
<evidence type="ECO:0000269" key="5">
    <source>
    </source>
</evidence>
<evidence type="ECO:0000269" key="6">
    <source>
    </source>
</evidence>
<feature type="chain" id="PRO_0000082459" description="SUMO-conjugating enzyme UBC9">
    <location>
        <begin position="1"/>
        <end position="158"/>
    </location>
</feature>
<feature type="domain" description="UBC core" evidence="3">
    <location>
        <begin position="4"/>
        <end position="157"/>
    </location>
</feature>
<feature type="region of interest" description="Interaction with SUMO1" evidence="1">
    <location>
        <begin position="13"/>
        <end position="18"/>
    </location>
</feature>
<feature type="active site" description="Glycyl thioester intermediate" evidence="3 4">
    <location>
        <position position="93"/>
    </location>
</feature>
<feature type="site" description="Interaction with RANBP2" evidence="1">
    <location>
        <position position="4"/>
    </location>
</feature>
<feature type="site" description="Interaction with RANBP2" evidence="1">
    <location>
        <position position="25"/>
    </location>
</feature>
<feature type="site" description="Interaction with RANBP2" evidence="1">
    <location>
        <position position="57"/>
    </location>
</feature>
<feature type="site" description="Substrate binding" evidence="1">
    <location>
        <begin position="100"/>
        <end position="101"/>
    </location>
</feature>
<sequence>MSGIALSRLAQERKAWRKDHPFGFVAVPTKNPDGTMNLMNWECAIPGKKGTPWEGGLFKLRMLFKDDYPSSPPKCKFEPPLFHPNVYPSGTVCLSILEEDKDWRPAITIKQILLGIQELLNEPNIQDPAQAEAYTIYCQNRVEYEKRVRAQAKKFAPS</sequence>
<keyword id="KW-0067">ATP-binding</keyword>
<keyword id="KW-0131">Cell cycle</keyword>
<keyword id="KW-0132">Cell division</keyword>
<keyword id="KW-0159">Chromosome partition</keyword>
<keyword id="KW-0963">Cytoplasm</keyword>
<keyword id="KW-0498">Mitosis</keyword>
<keyword id="KW-0547">Nucleotide-binding</keyword>
<keyword id="KW-0539">Nucleus</keyword>
<keyword id="KW-1185">Reference proteome</keyword>
<keyword id="KW-0808">Transferase</keyword>
<keyword id="KW-0833">Ubl conjugation pathway</keyword>
<accession>P63283</accession>
<accession>P50550</accession>
<accession>Q15698</accession>
<accession>Q547R1</accession>
<accession>Q86VB3</accession>
<name>UBC9_CHICK</name>
<proteinExistence type="evidence at protein level"/>
<dbReference type="EC" id="2.3.2.-"/>
<dbReference type="EMBL" id="AB069964">
    <property type="protein sequence ID" value="BAB68210.1"/>
    <property type="molecule type" value="mRNA"/>
</dbReference>
<dbReference type="EMBL" id="AF461016">
    <property type="protein sequence ID" value="AAL85282.1"/>
    <property type="molecule type" value="mRNA"/>
</dbReference>
<dbReference type="RefSeq" id="NP_001383751.1">
    <property type="nucleotide sequence ID" value="NM_001396822.1"/>
</dbReference>
<dbReference type="RefSeq" id="NP_001383752.1">
    <property type="nucleotide sequence ID" value="NM_001396823.1"/>
</dbReference>
<dbReference type="RefSeq" id="NP_001383753.1">
    <property type="nucleotide sequence ID" value="NM_001396824.1"/>
</dbReference>
<dbReference type="RefSeq" id="NP_989596.1">
    <property type="nucleotide sequence ID" value="NM_204265.1"/>
</dbReference>
<dbReference type="RefSeq" id="XP_015149596.1">
    <property type="nucleotide sequence ID" value="XM_015294110.1"/>
</dbReference>
<dbReference type="RefSeq" id="XP_015149597.1">
    <property type="nucleotide sequence ID" value="XM_015294111.1"/>
</dbReference>
<dbReference type="RefSeq" id="XP_015149598.1">
    <property type="nucleotide sequence ID" value="XM_015294112.1"/>
</dbReference>
<dbReference type="RefSeq" id="XP_015149599.1">
    <property type="nucleotide sequence ID" value="XM_015294113.1"/>
</dbReference>
<dbReference type="RefSeq" id="XP_015149601.1">
    <property type="nucleotide sequence ID" value="XM_015294115.1"/>
</dbReference>
<dbReference type="RefSeq" id="XP_040503236.1">
    <property type="nucleotide sequence ID" value="XM_040647302.2"/>
</dbReference>
<dbReference type="RefSeq" id="XP_040503237.1">
    <property type="nucleotide sequence ID" value="XM_040647303.2"/>
</dbReference>
<dbReference type="RefSeq" id="XP_046756503.1">
    <property type="nucleotide sequence ID" value="XM_046900547.1"/>
</dbReference>
<dbReference type="RefSeq" id="XP_046756504.1">
    <property type="nucleotide sequence ID" value="XM_046900548.1"/>
</dbReference>
<dbReference type="RefSeq" id="XP_046783213.1">
    <property type="nucleotide sequence ID" value="XM_046927257.1"/>
</dbReference>
<dbReference type="RefSeq" id="XP_046783214.1">
    <property type="nucleotide sequence ID" value="XM_046927258.1"/>
</dbReference>
<dbReference type="RefSeq" id="XP_046783215.1">
    <property type="nucleotide sequence ID" value="XM_046927259.1"/>
</dbReference>
<dbReference type="RefSeq" id="XP_046783216.1">
    <property type="nucleotide sequence ID" value="XM_046927260.1"/>
</dbReference>
<dbReference type="BMRB" id="P63283"/>
<dbReference type="SMR" id="P63283"/>
<dbReference type="BioGRID" id="675156">
    <property type="interactions" value="1"/>
</dbReference>
<dbReference type="FunCoup" id="P63283">
    <property type="interactions" value="3261"/>
</dbReference>
<dbReference type="STRING" id="9031.ENSGALP00000010363"/>
<dbReference type="PaxDb" id="9031-ENSGALP00000010363"/>
<dbReference type="Ensembl" id="ENSGALT00010049340.1">
    <property type="protein sequence ID" value="ENSGALP00010029169.1"/>
    <property type="gene ID" value="ENSGALG00010020405.1"/>
</dbReference>
<dbReference type="GeneID" id="374123"/>
<dbReference type="KEGG" id="gga:374123"/>
<dbReference type="VEuPathDB" id="HostDB:geneid_374123"/>
<dbReference type="eggNOG" id="KOG0424">
    <property type="taxonomic scope" value="Eukaryota"/>
</dbReference>
<dbReference type="GeneTree" id="ENSGT00550000075088"/>
<dbReference type="HOGENOM" id="CLU_030988_12_0_1"/>
<dbReference type="InParanoid" id="P63283"/>
<dbReference type="OMA" id="TWECGIP"/>
<dbReference type="OrthoDB" id="6600758at2759"/>
<dbReference type="PhylomeDB" id="P63283"/>
<dbReference type="Reactome" id="R-GGA-196791">
    <property type="pathway name" value="Vitamin D (calciferol) metabolism"/>
</dbReference>
<dbReference type="Reactome" id="R-GGA-3065678">
    <property type="pathway name" value="SUMO is transferred from E1 to E2 (UBE2I, UBC9)"/>
</dbReference>
<dbReference type="Reactome" id="R-GGA-3108214">
    <property type="pathway name" value="SUMOylation of DNA damage response and repair proteins"/>
</dbReference>
<dbReference type="Reactome" id="R-GGA-3232118">
    <property type="pathway name" value="SUMOylation of transcription factors"/>
</dbReference>
<dbReference type="Reactome" id="R-GGA-3232142">
    <property type="pathway name" value="SUMOylation of ubiquitinylation proteins"/>
</dbReference>
<dbReference type="Reactome" id="R-GGA-3899300">
    <property type="pathway name" value="SUMOylation of transcription cofactors"/>
</dbReference>
<dbReference type="Reactome" id="R-GGA-4085377">
    <property type="pathway name" value="SUMOylation of SUMOylation proteins"/>
</dbReference>
<dbReference type="Reactome" id="R-GGA-4090294">
    <property type="pathway name" value="SUMOylation of intracellular receptors"/>
</dbReference>
<dbReference type="Reactome" id="R-GGA-4551638">
    <property type="pathway name" value="SUMOylation of chromatin organization proteins"/>
</dbReference>
<dbReference type="Reactome" id="R-GGA-4570464">
    <property type="pathway name" value="SUMOylation of RNA binding proteins"/>
</dbReference>
<dbReference type="Reactome" id="R-GGA-4615885">
    <property type="pathway name" value="SUMOylation of DNA replication proteins"/>
</dbReference>
<dbReference type="Reactome" id="R-GGA-4655427">
    <property type="pathway name" value="SUMOylation of DNA methylation proteins"/>
</dbReference>
<dbReference type="Reactome" id="R-GGA-4755510">
    <property type="pathway name" value="SUMOylation of immune response proteins"/>
</dbReference>
<dbReference type="Reactome" id="R-GGA-5693565">
    <property type="pathway name" value="Recruitment and ATM-mediated phosphorylation of repair and signaling proteins at DNA double strand breaks"/>
</dbReference>
<dbReference type="Reactome" id="R-GGA-5693607">
    <property type="pathway name" value="Processing of DNA double-strand break ends"/>
</dbReference>
<dbReference type="Reactome" id="R-GGA-5696395">
    <property type="pathway name" value="Formation of Incision Complex in GG-NER"/>
</dbReference>
<dbReference type="Reactome" id="R-GGA-8866904">
    <property type="pathway name" value="Negative regulation of activity of TFAP2 (AP-2) family transcription factors"/>
</dbReference>
<dbReference type="Reactome" id="R-GGA-9615933">
    <property type="pathway name" value="Postmitotic nuclear pore complex (NPC) reformation"/>
</dbReference>
<dbReference type="Reactome" id="R-GGA-9793242">
    <property type="pathway name" value="SUMOylation of nuclear envelope proteins"/>
</dbReference>
<dbReference type="Reactome" id="R-GGA-9856649">
    <property type="pathway name" value="Transcriptional and post-translational regulation of MITF-M expression and activity"/>
</dbReference>
<dbReference type="UniPathway" id="UPA00886"/>
<dbReference type="CD-CODE" id="A1E2A3BE">
    <property type="entry name" value="Nucleolus"/>
</dbReference>
<dbReference type="PRO" id="PR:P63283"/>
<dbReference type="Proteomes" id="UP000000539">
    <property type="component" value="Chromosome 14"/>
</dbReference>
<dbReference type="Bgee" id="ENSGALG00000006428">
    <property type="expression patterns" value="Expressed in spermatid and 12 other cell types or tissues"/>
</dbReference>
<dbReference type="GO" id="GO:0098978">
    <property type="term" value="C:glutamatergic synapse"/>
    <property type="evidence" value="ECO:0007669"/>
    <property type="project" value="Ensembl"/>
</dbReference>
<dbReference type="GO" id="GO:0005634">
    <property type="term" value="C:nucleus"/>
    <property type="evidence" value="ECO:0000250"/>
    <property type="project" value="UniProtKB"/>
</dbReference>
<dbReference type="GO" id="GO:0016605">
    <property type="term" value="C:PML body"/>
    <property type="evidence" value="ECO:0007669"/>
    <property type="project" value="Ensembl"/>
</dbReference>
<dbReference type="GO" id="GO:0099524">
    <property type="term" value="C:postsynaptic cytosol"/>
    <property type="evidence" value="ECO:0007669"/>
    <property type="project" value="Ensembl"/>
</dbReference>
<dbReference type="GO" id="GO:0099523">
    <property type="term" value="C:presynaptic cytosol"/>
    <property type="evidence" value="ECO:0007669"/>
    <property type="project" value="Ensembl"/>
</dbReference>
<dbReference type="GO" id="GO:0098685">
    <property type="term" value="C:Schaffer collateral - CA1 synapse"/>
    <property type="evidence" value="ECO:0007669"/>
    <property type="project" value="Ensembl"/>
</dbReference>
<dbReference type="GO" id="GO:0106068">
    <property type="term" value="C:SUMO ligase complex"/>
    <property type="evidence" value="ECO:0007669"/>
    <property type="project" value="Ensembl"/>
</dbReference>
<dbReference type="GO" id="GO:0005524">
    <property type="term" value="F:ATP binding"/>
    <property type="evidence" value="ECO:0007669"/>
    <property type="project" value="UniProtKB-KW"/>
</dbReference>
<dbReference type="GO" id="GO:0043398">
    <property type="term" value="F:HLH domain binding"/>
    <property type="evidence" value="ECO:0007669"/>
    <property type="project" value="Ensembl"/>
</dbReference>
<dbReference type="GO" id="GO:0071535">
    <property type="term" value="F:RING-like zinc finger domain binding"/>
    <property type="evidence" value="ECO:0007669"/>
    <property type="project" value="Ensembl"/>
</dbReference>
<dbReference type="GO" id="GO:0044388">
    <property type="term" value="F:small protein activating enzyme binding"/>
    <property type="evidence" value="ECO:0007669"/>
    <property type="project" value="Ensembl"/>
</dbReference>
<dbReference type="GO" id="GO:0061656">
    <property type="term" value="F:SUMO conjugating enzyme activity"/>
    <property type="evidence" value="ECO:0000318"/>
    <property type="project" value="GO_Central"/>
</dbReference>
<dbReference type="GO" id="GO:0001221">
    <property type="term" value="F:transcription coregulator binding"/>
    <property type="evidence" value="ECO:0007669"/>
    <property type="project" value="Ensembl"/>
</dbReference>
<dbReference type="GO" id="GO:0008134">
    <property type="term" value="F:transcription factor binding"/>
    <property type="evidence" value="ECO:0000353"/>
    <property type="project" value="AgBase"/>
</dbReference>
<dbReference type="GO" id="GO:0051301">
    <property type="term" value="P:cell division"/>
    <property type="evidence" value="ECO:0007669"/>
    <property type="project" value="UniProtKB-KW"/>
</dbReference>
<dbReference type="GO" id="GO:0007059">
    <property type="term" value="P:chromosome segregation"/>
    <property type="evidence" value="ECO:0007669"/>
    <property type="project" value="UniProtKB-KW"/>
</dbReference>
<dbReference type="GO" id="GO:0050804">
    <property type="term" value="P:modulation of chemical synaptic transmission"/>
    <property type="evidence" value="ECO:0007669"/>
    <property type="project" value="Ensembl"/>
</dbReference>
<dbReference type="GO" id="GO:0000122">
    <property type="term" value="P:negative regulation of transcription by RNA polymerase II"/>
    <property type="evidence" value="ECO:0007669"/>
    <property type="project" value="Ensembl"/>
</dbReference>
<dbReference type="GO" id="GO:0043123">
    <property type="term" value="P:positive regulation of canonical NF-kappaB signal transduction"/>
    <property type="evidence" value="ECO:0007669"/>
    <property type="project" value="Ensembl"/>
</dbReference>
<dbReference type="GO" id="GO:0030335">
    <property type="term" value="P:positive regulation of cell migration"/>
    <property type="evidence" value="ECO:0007669"/>
    <property type="project" value="Ensembl"/>
</dbReference>
<dbReference type="GO" id="GO:0016925">
    <property type="term" value="P:protein sumoylation"/>
    <property type="evidence" value="ECO:0000318"/>
    <property type="project" value="GO_Central"/>
</dbReference>
<dbReference type="CDD" id="cd23798">
    <property type="entry name" value="UBCc_UBE2I"/>
    <property type="match status" value="1"/>
</dbReference>
<dbReference type="FunFam" id="3.10.110.10:FF:000013">
    <property type="entry name" value="SUMO-conjugating enzyme UBC9"/>
    <property type="match status" value="1"/>
</dbReference>
<dbReference type="Gene3D" id="3.10.110.10">
    <property type="entry name" value="Ubiquitin Conjugating Enzyme"/>
    <property type="match status" value="1"/>
</dbReference>
<dbReference type="InterPro" id="IPR050113">
    <property type="entry name" value="Ub_conjugating_enzyme"/>
</dbReference>
<dbReference type="InterPro" id="IPR000608">
    <property type="entry name" value="UBQ-conjugat_E2_core"/>
</dbReference>
<dbReference type="InterPro" id="IPR023313">
    <property type="entry name" value="UBQ-conjugating_AS"/>
</dbReference>
<dbReference type="InterPro" id="IPR016135">
    <property type="entry name" value="UBQ-conjugating_enzyme/RWD"/>
</dbReference>
<dbReference type="PANTHER" id="PTHR24067">
    <property type="entry name" value="UBIQUITIN-CONJUGATING ENZYME E2"/>
    <property type="match status" value="1"/>
</dbReference>
<dbReference type="Pfam" id="PF00179">
    <property type="entry name" value="UQ_con"/>
    <property type="match status" value="1"/>
</dbReference>
<dbReference type="SMART" id="SM00212">
    <property type="entry name" value="UBCc"/>
    <property type="match status" value="1"/>
</dbReference>
<dbReference type="SUPFAM" id="SSF54495">
    <property type="entry name" value="UBC-like"/>
    <property type="match status" value="1"/>
</dbReference>
<dbReference type="PROSITE" id="PS00183">
    <property type="entry name" value="UBC_1"/>
    <property type="match status" value="1"/>
</dbReference>
<dbReference type="PROSITE" id="PS50127">
    <property type="entry name" value="UBC_2"/>
    <property type="match status" value="1"/>
</dbReference>
<protein>
    <recommendedName>
        <fullName>SUMO-conjugating enzyme UBC9</fullName>
        <ecNumber>2.3.2.-</ecNumber>
    </recommendedName>
    <alternativeName>
        <fullName>RING-type E3 SUMO transferase UBC9</fullName>
    </alternativeName>
    <alternativeName>
        <fullName>SUMO-protein ligase</fullName>
    </alternativeName>
    <alternativeName>
        <fullName>Ubiquitin carrier protein 9</fullName>
    </alternativeName>
    <alternativeName>
        <fullName>Ubiquitin carrier protein I</fullName>
    </alternativeName>
    <alternativeName>
        <fullName>Ubiquitin-conjugating enzyme E2 I</fullName>
    </alternativeName>
    <alternativeName>
        <fullName>Ubiquitin-protein ligase I</fullName>
    </alternativeName>
</protein>
<comment type="function">
    <text evidence="5">Accepts the ubiquitin-like proteins SUMO1, SUMO2 and SUMO3 from the UBLE1A-UBLE1B E1 complex and catalyzes their covalent attachment to other proteins with the help of an E3 ligase such as RANBP2 or CBX4. Essential for nuclear architecture and chromosome segregation.</text>
</comment>
<comment type="pathway">
    <text>Protein modification; protein sumoylation.</text>
</comment>
<comment type="subunit">
    <text evidence="6">Interacts with SOX9.</text>
</comment>
<comment type="subcellular location">
    <subcellularLocation>
        <location evidence="2">Nucleus</location>
    </subcellularLocation>
    <subcellularLocation>
        <location evidence="2">Cytoplasm</location>
    </subcellularLocation>
</comment>
<comment type="similarity">
    <text evidence="3">Belongs to the ubiquitin-conjugating enzyme family.</text>
</comment>
<gene>
    <name type="primary">UBE2I</name>
    <name type="synonym">UBC9</name>
    <name type="synonym">UBCE9</name>
</gene>
<organism>
    <name type="scientific">Gallus gallus</name>
    <name type="common">Chicken</name>
    <dbReference type="NCBI Taxonomy" id="9031"/>
    <lineage>
        <taxon>Eukaryota</taxon>
        <taxon>Metazoa</taxon>
        <taxon>Chordata</taxon>
        <taxon>Craniata</taxon>
        <taxon>Vertebrata</taxon>
        <taxon>Euteleostomi</taxon>
        <taxon>Archelosauria</taxon>
        <taxon>Archosauria</taxon>
        <taxon>Dinosauria</taxon>
        <taxon>Saurischia</taxon>
        <taxon>Theropoda</taxon>
        <taxon>Coelurosauria</taxon>
        <taxon>Aves</taxon>
        <taxon>Neognathae</taxon>
        <taxon>Galloanserae</taxon>
        <taxon>Galliformes</taxon>
        <taxon>Phasianidae</taxon>
        <taxon>Phasianinae</taxon>
        <taxon>Gallus</taxon>
    </lineage>
</organism>
<reference key="1">
    <citation type="journal article" date="2002" name="Exp. Cell Res.">
        <title>Ubc9 is essential for viability of higher eukaryotic cells.</title>
        <authorList>
            <person name="Hayashi T."/>
            <person name="Seki M."/>
            <person name="Maeda D."/>
            <person name="Wang W."/>
            <person name="Kawabe Y."/>
            <person name="Seki T."/>
            <person name="Saitoh H."/>
            <person name="Fukagawa T."/>
            <person name="Yagi H."/>
            <person name="Enomoto T."/>
        </authorList>
    </citation>
    <scope>NUCLEOTIDE SEQUENCE [MRNA]</scope>
    <scope>FUNCTION</scope>
</reference>
<reference key="2">
    <citation type="submission" date="2001-12" db="EMBL/GenBank/DDBJ databases">
        <title>Protein-protein interactions of Kvbeta.</title>
        <authorList>
            <person name="Venkataramu C.R."/>
            <person name="Sokolowski B.H.A."/>
        </authorList>
    </citation>
    <scope>NUCLEOTIDE SEQUENCE [MRNA]</scope>
    <source>
        <tissue>Inner ear</tissue>
    </source>
</reference>
<reference key="3">
    <citation type="journal article" date="2013" name="Proc. Natl. Acad. Sci. U.S.A.">
        <title>Phosphorylation of Sox9 is required for neural crest delamination and is regulated downstream of BMP and canonical Wnt signaling.</title>
        <authorList>
            <person name="Liu J.A."/>
            <person name="Wu M.H."/>
            <person name="Yan C.H."/>
            <person name="Chau B.K."/>
            <person name="So H."/>
            <person name="Ng A."/>
            <person name="Chan A."/>
            <person name="Cheah K.S."/>
            <person name="Briscoe J."/>
            <person name="Cheung M."/>
        </authorList>
    </citation>
    <scope>INTERACTION WITH SOX9</scope>
</reference>